<keyword id="KW-0067">ATP-binding</keyword>
<keyword id="KW-0460">Magnesium</keyword>
<keyword id="KW-0547">Nucleotide-binding</keyword>
<keyword id="KW-1185">Reference proteome</keyword>
<keyword id="KW-0808">Transferase</keyword>
<keyword id="KW-0819">tRNA processing</keyword>
<reference key="1">
    <citation type="submission" date="2009-06" db="EMBL/GenBank/DDBJ databases">
        <title>Complete sequence of Desulfovibrio salexigens DSM 2638.</title>
        <authorList>
            <consortium name="US DOE Joint Genome Institute"/>
            <person name="Lucas S."/>
            <person name="Copeland A."/>
            <person name="Lapidus A."/>
            <person name="Glavina del Rio T."/>
            <person name="Tice H."/>
            <person name="Bruce D."/>
            <person name="Goodwin L."/>
            <person name="Pitluck S."/>
            <person name="Munk A.C."/>
            <person name="Brettin T."/>
            <person name="Detter J.C."/>
            <person name="Han C."/>
            <person name="Tapia R."/>
            <person name="Larimer F."/>
            <person name="Land M."/>
            <person name="Hauser L."/>
            <person name="Kyrpides N."/>
            <person name="Anderson I."/>
            <person name="Wall J.D."/>
            <person name="Arkin A.P."/>
            <person name="Dehal P."/>
            <person name="Chivian D."/>
            <person name="Giles B."/>
            <person name="Hazen T.C."/>
        </authorList>
    </citation>
    <scope>NUCLEOTIDE SEQUENCE [LARGE SCALE GENOMIC DNA]</scope>
    <source>
        <strain>ATCC 14822 / DSM 2638 / NCIMB 8403 / VKM B-1763</strain>
    </source>
</reference>
<comment type="function">
    <text evidence="1">Catalyzes the transfer of a dimethylallyl group onto the adenine at position 37 in tRNAs that read codons beginning with uridine, leading to the formation of N6-(dimethylallyl)adenosine (i(6)A).</text>
</comment>
<comment type="catalytic activity">
    <reaction evidence="1">
        <text>adenosine(37) in tRNA + dimethylallyl diphosphate = N(6)-dimethylallyladenosine(37) in tRNA + diphosphate</text>
        <dbReference type="Rhea" id="RHEA:26482"/>
        <dbReference type="Rhea" id="RHEA-COMP:10162"/>
        <dbReference type="Rhea" id="RHEA-COMP:10375"/>
        <dbReference type="ChEBI" id="CHEBI:33019"/>
        <dbReference type="ChEBI" id="CHEBI:57623"/>
        <dbReference type="ChEBI" id="CHEBI:74411"/>
        <dbReference type="ChEBI" id="CHEBI:74415"/>
        <dbReference type="EC" id="2.5.1.75"/>
    </reaction>
</comment>
<comment type="cofactor">
    <cofactor evidence="1">
        <name>Mg(2+)</name>
        <dbReference type="ChEBI" id="CHEBI:18420"/>
    </cofactor>
</comment>
<comment type="subunit">
    <text evidence="1">Monomer.</text>
</comment>
<comment type="similarity">
    <text evidence="1">Belongs to the IPP transferase family.</text>
</comment>
<name>MIAA_MARSD</name>
<organism>
    <name type="scientific">Maridesulfovibrio salexigens (strain ATCC 14822 / DSM 2638 / NCIMB 8403 / VKM B-1763)</name>
    <name type="common">Desulfovibrio salexigens</name>
    <dbReference type="NCBI Taxonomy" id="526222"/>
    <lineage>
        <taxon>Bacteria</taxon>
        <taxon>Pseudomonadati</taxon>
        <taxon>Thermodesulfobacteriota</taxon>
        <taxon>Desulfovibrionia</taxon>
        <taxon>Desulfovibrionales</taxon>
        <taxon>Desulfovibrionaceae</taxon>
        <taxon>Maridesulfovibrio</taxon>
    </lineage>
</organism>
<dbReference type="EC" id="2.5.1.75" evidence="1"/>
<dbReference type="EMBL" id="CP001649">
    <property type="protein sequence ID" value="ACS80466.1"/>
    <property type="molecule type" value="Genomic_DNA"/>
</dbReference>
<dbReference type="RefSeq" id="WP_015852282.1">
    <property type="nucleotide sequence ID" value="NC_012881.1"/>
</dbReference>
<dbReference type="SMR" id="C6BXG0"/>
<dbReference type="STRING" id="526222.Desal_2410"/>
<dbReference type="KEGG" id="dsa:Desal_2410"/>
<dbReference type="eggNOG" id="COG0324">
    <property type="taxonomic scope" value="Bacteria"/>
</dbReference>
<dbReference type="HOGENOM" id="CLU_032616_0_1_7"/>
<dbReference type="OrthoDB" id="9776390at2"/>
<dbReference type="Proteomes" id="UP000002601">
    <property type="component" value="Chromosome"/>
</dbReference>
<dbReference type="GO" id="GO:0005524">
    <property type="term" value="F:ATP binding"/>
    <property type="evidence" value="ECO:0007669"/>
    <property type="project" value="UniProtKB-UniRule"/>
</dbReference>
<dbReference type="GO" id="GO:0052381">
    <property type="term" value="F:tRNA dimethylallyltransferase activity"/>
    <property type="evidence" value="ECO:0007669"/>
    <property type="project" value="UniProtKB-UniRule"/>
</dbReference>
<dbReference type="GO" id="GO:0006400">
    <property type="term" value="P:tRNA modification"/>
    <property type="evidence" value="ECO:0007669"/>
    <property type="project" value="TreeGrafter"/>
</dbReference>
<dbReference type="FunFam" id="1.10.20.140:FF:000001">
    <property type="entry name" value="tRNA dimethylallyltransferase"/>
    <property type="match status" value="1"/>
</dbReference>
<dbReference type="Gene3D" id="1.10.20.140">
    <property type="match status" value="1"/>
</dbReference>
<dbReference type="Gene3D" id="3.40.50.300">
    <property type="entry name" value="P-loop containing nucleotide triphosphate hydrolases"/>
    <property type="match status" value="1"/>
</dbReference>
<dbReference type="HAMAP" id="MF_00185">
    <property type="entry name" value="IPP_trans"/>
    <property type="match status" value="1"/>
</dbReference>
<dbReference type="InterPro" id="IPR039657">
    <property type="entry name" value="Dimethylallyltransferase"/>
</dbReference>
<dbReference type="InterPro" id="IPR018022">
    <property type="entry name" value="IPT"/>
</dbReference>
<dbReference type="InterPro" id="IPR027417">
    <property type="entry name" value="P-loop_NTPase"/>
</dbReference>
<dbReference type="NCBIfam" id="TIGR00174">
    <property type="entry name" value="miaA"/>
    <property type="match status" value="1"/>
</dbReference>
<dbReference type="PANTHER" id="PTHR11088">
    <property type="entry name" value="TRNA DIMETHYLALLYLTRANSFERASE"/>
    <property type="match status" value="1"/>
</dbReference>
<dbReference type="PANTHER" id="PTHR11088:SF60">
    <property type="entry name" value="TRNA DIMETHYLALLYLTRANSFERASE"/>
    <property type="match status" value="1"/>
</dbReference>
<dbReference type="Pfam" id="PF01715">
    <property type="entry name" value="IPPT"/>
    <property type="match status" value="1"/>
</dbReference>
<dbReference type="SUPFAM" id="SSF52540">
    <property type="entry name" value="P-loop containing nucleoside triphosphate hydrolases"/>
    <property type="match status" value="1"/>
</dbReference>
<protein>
    <recommendedName>
        <fullName evidence="1">tRNA dimethylallyltransferase</fullName>
        <ecNumber evidence="1">2.5.1.75</ecNumber>
    </recommendedName>
    <alternativeName>
        <fullName evidence="1">Dimethylallyl diphosphate:tRNA dimethylallyltransferase</fullName>
        <shortName evidence="1">DMAPP:tRNA dimethylallyltransferase</shortName>
        <shortName evidence="1">DMATase</shortName>
    </alternativeName>
    <alternativeName>
        <fullName evidence="1">Isopentenyl-diphosphate:tRNA isopentenyltransferase</fullName>
        <shortName evidence="1">IPP transferase</shortName>
        <shortName evidence="1">IPPT</shortName>
        <shortName evidence="1">IPTase</shortName>
    </alternativeName>
</protein>
<gene>
    <name evidence="1" type="primary">miaA</name>
    <name type="ordered locus">Desal_2410</name>
</gene>
<accession>C6BXG0</accession>
<evidence type="ECO:0000255" key="1">
    <source>
        <dbReference type="HAMAP-Rule" id="MF_00185"/>
    </source>
</evidence>
<feature type="chain" id="PRO_1000203935" description="tRNA dimethylallyltransferase">
    <location>
        <begin position="1"/>
        <end position="306"/>
    </location>
</feature>
<feature type="region of interest" description="Interaction with substrate tRNA" evidence="1">
    <location>
        <begin position="38"/>
        <end position="41"/>
    </location>
</feature>
<feature type="region of interest" description="Interaction with substrate tRNA" evidence="1">
    <location>
        <begin position="161"/>
        <end position="165"/>
    </location>
</feature>
<feature type="binding site" evidence="1">
    <location>
        <begin position="13"/>
        <end position="20"/>
    </location>
    <ligand>
        <name>ATP</name>
        <dbReference type="ChEBI" id="CHEBI:30616"/>
    </ligand>
</feature>
<feature type="binding site" evidence="1">
    <location>
        <begin position="15"/>
        <end position="20"/>
    </location>
    <ligand>
        <name>substrate</name>
    </ligand>
</feature>
<feature type="site" description="Interaction with substrate tRNA" evidence="1">
    <location>
        <position position="103"/>
    </location>
</feature>
<feature type="site" description="Interaction with substrate tRNA" evidence="1">
    <location>
        <position position="125"/>
    </location>
</feature>
<proteinExistence type="inferred from homology"/>
<sequence length="306" mass="34784">MMEKRRPVVCILGPTGAGKTATSLGMARKFPVRVINFDSRQVYTDFPVITAQPSPEERAVCPHELYGFLPTTETINASGFVDLAKERIDAAEAGELPVLVGGTGMYLQSLISGLAPIPDIPDEIRERIRKRSEEEGGPALYAELEKVDPEYCKRTHPNNRQRNARALEVYEATGKPFSWWHNREVPPSPYNFLKIGIKVDLDELTPLLKLRIEKMLEAGAVEEARKAWENCPDENAPGWTGIGCIELMRYIKGEIDLDETIRLWAKNTRAYAKRQLTWFKREKDIHWFAPHEYDKAVTFVGQWLAD</sequence>